<accession>P07543</accession>
<name>VIRE1_RHIRD</name>
<dbReference type="EMBL" id="AF242881">
    <property type="protein sequence ID" value="AAF77176.1"/>
    <property type="molecule type" value="Genomic_DNA"/>
</dbReference>
<dbReference type="EMBL" id="M20143">
    <property type="protein sequence ID" value="AAA27399.1"/>
    <property type="molecule type" value="Genomic_DNA"/>
</dbReference>
<dbReference type="PIR" id="A26446">
    <property type="entry name" value="A26446"/>
</dbReference>
<dbReference type="RefSeq" id="NP_059818.1">
    <property type="nucleotide sequence ID" value="NC_002377.1"/>
</dbReference>
<dbReference type="RefSeq" id="WP_010892506.1">
    <property type="nucleotide sequence ID" value="NZ_QSNU01000012.1"/>
</dbReference>
<dbReference type="SMR" id="P07543"/>
<dbReference type="IntAct" id="P07543">
    <property type="interactions" value="1"/>
</dbReference>
<dbReference type="OrthoDB" id="8291026at2"/>
<dbReference type="GO" id="GO:0006457">
    <property type="term" value="P:protein folding"/>
    <property type="evidence" value="ECO:0007669"/>
    <property type="project" value="InterPro"/>
</dbReference>
<dbReference type="InterPro" id="IPR024237">
    <property type="entry name" value="VirE1"/>
</dbReference>
<dbReference type="NCBIfam" id="NF010441">
    <property type="entry name" value="PRK13867.1"/>
    <property type="match status" value="1"/>
</dbReference>
<dbReference type="Pfam" id="PF12189">
    <property type="entry name" value="VirE1"/>
    <property type="match status" value="1"/>
</dbReference>
<feature type="chain" id="PRO_0000065865" description="Protein virE1">
    <location>
        <begin position="1"/>
        <end position="65"/>
    </location>
</feature>
<proteinExistence type="inferred from homology"/>
<sequence>MAIIKPHANKNRTTSPIERPESLIEEMSGSNPPIGFTSLDLAMIELEDFVHRCPLPGDNLAGQKE</sequence>
<gene>
    <name type="primary">virE1</name>
</gene>
<organism>
    <name type="scientific">Rhizobium radiobacter</name>
    <name type="common">Agrobacterium tumefaciens</name>
    <name type="synonym">Agrobacterium radiobacter</name>
    <dbReference type="NCBI Taxonomy" id="358"/>
    <lineage>
        <taxon>Bacteria</taxon>
        <taxon>Pseudomonadati</taxon>
        <taxon>Pseudomonadota</taxon>
        <taxon>Alphaproteobacteria</taxon>
        <taxon>Hyphomicrobiales</taxon>
        <taxon>Rhizobiaceae</taxon>
        <taxon>Rhizobium/Agrobacterium group</taxon>
        <taxon>Agrobacterium</taxon>
        <taxon>Agrobacterium tumefaciens complex</taxon>
    </lineage>
</organism>
<keyword id="KW-0192">Crown gall tumor</keyword>
<keyword id="KW-0614">Plasmid</keyword>
<reference key="1">
    <citation type="journal article" date="1987" name="Nucleic Acids Res.">
        <title>Characterization of the virE operon of the Agrobacterium Ti plasmid pTiA6.</title>
        <authorList>
            <person name="Winans S.C."/>
            <person name="Allenza P."/>
            <person name="Stachel S.E."/>
            <person name="McBride K.E."/>
            <person name="Nester E.W."/>
        </authorList>
    </citation>
    <scope>NUCLEOTIDE SEQUENCE [GENOMIC DNA]</scope>
</reference>
<reference key="2">
    <citation type="journal article" date="1988" name="J. Bacteriol.">
        <title>Genetic analysis of the virE operon of the Agrobacterium Ti plasmid pTiA6.</title>
        <authorList>
            <person name="McBride K.E."/>
            <person name="Knauf V.C."/>
        </authorList>
    </citation>
    <scope>NUCLEOTIDE SEQUENCE [GENOMIC DNA]</scope>
</reference>
<comment type="function">
    <text evidence="1">Involved in DNA transformation; controls virE2 polymerization and prevents virE2 binding to DNA.</text>
</comment>
<comment type="subunit">
    <text evidence="1">Forms heterodimers with virE2 that prevent virE2 anarchic homopolymerization and binding to DNA.</text>
</comment>
<comment type="miscellaneous">
    <text>The Ti plasmid contains at least six transcriptional units, designated vir loci, which are essential for efficient crown-gall tumorigenesis.</text>
</comment>
<geneLocation type="plasmid">
    <name>pTiA6</name>
</geneLocation>
<evidence type="ECO:0000250" key="1"/>
<protein>
    <recommendedName>
        <fullName>Protein virE1</fullName>
    </recommendedName>
</protein>